<name>COG1_HUMAN</name>
<reference key="1">
    <citation type="journal article" date="2004" name="Genome Res.">
        <title>The status, quality, and expansion of the NIH full-length cDNA project: the Mammalian Gene Collection (MGC).</title>
        <authorList>
            <consortium name="The MGC Project Team"/>
        </authorList>
    </citation>
    <scope>NUCLEOTIDE SEQUENCE [LARGE SCALE MRNA]</scope>
    <source>
        <tissue>Lung</tissue>
    </source>
</reference>
<reference key="2">
    <citation type="journal article" date="2000" name="DNA Res.">
        <title>Prediction of the coding sequences of unidentified human genes. XVI. The complete sequences of 150 new cDNA clones from brain which code for large proteins in vitro.</title>
        <authorList>
            <person name="Nagase T."/>
            <person name="Kikuno R."/>
            <person name="Ishikawa K."/>
            <person name="Hirosawa M."/>
            <person name="Ohara O."/>
        </authorList>
    </citation>
    <scope>NUCLEOTIDE SEQUENCE [LARGE SCALE MRNA] OF 2-980</scope>
    <source>
        <tissue>Brain</tissue>
    </source>
</reference>
<reference key="3">
    <citation type="journal article" date="2007" name="BMC Genomics">
        <title>The full-ORF clone resource of the German cDNA consortium.</title>
        <authorList>
            <person name="Bechtel S."/>
            <person name="Rosenfelder H."/>
            <person name="Duda A."/>
            <person name="Schmidt C.P."/>
            <person name="Ernst U."/>
            <person name="Wellenreuther R."/>
            <person name="Mehrle A."/>
            <person name="Schuster C."/>
            <person name="Bahr A."/>
            <person name="Bloecker H."/>
            <person name="Heubner D."/>
            <person name="Hoerlein A."/>
            <person name="Michel G."/>
            <person name="Wedler H."/>
            <person name="Koehrer K."/>
            <person name="Ottenwaelder B."/>
            <person name="Poustka A."/>
            <person name="Wiemann S."/>
            <person name="Schupp I."/>
        </authorList>
    </citation>
    <scope>NUCLEOTIDE SEQUENCE [LARGE SCALE MRNA] OF 543-980</scope>
    <source>
        <tissue>Melanoma</tissue>
    </source>
</reference>
<reference key="4">
    <citation type="journal article" date="2002" name="J. Cell Biol.">
        <title>Characterization of a mammalian Golgi-localized protein complex, COG, that is required for normal Golgi morphology and function.</title>
        <authorList>
            <person name="Ungar D."/>
            <person name="Oka T."/>
            <person name="Brittle E.E."/>
            <person name="Vasile E."/>
            <person name="Lupashin V.V."/>
            <person name="Chatterton J.E."/>
            <person name="Heuser J.E."/>
            <person name="Krieger M."/>
            <person name="Waters M.G."/>
        </authorList>
    </citation>
    <scope>SUBUNIT</scope>
    <scope>SUBCELLULAR LOCATION</scope>
</reference>
<reference key="5">
    <citation type="journal article" date="2006" name="Proc. Natl. Acad. Sci. U.S.A.">
        <title>Conserved oligomeric Golgi complex subunit 1 deficiency reveals a previously uncharacterized congenital disorder of glycosylation type II.</title>
        <authorList>
            <person name="Foulquier F."/>
            <person name="Vasile E."/>
            <person name="Schollen E."/>
            <person name="Callewaert N."/>
            <person name="Raemaekers T."/>
            <person name="Quelhas D."/>
            <person name="Jaeken J."/>
            <person name="Mills P."/>
            <person name="Winchester B."/>
            <person name="Krieger M."/>
            <person name="Annaert W."/>
            <person name="Matthijs G."/>
        </authorList>
    </citation>
    <scope>INVOLVEMENT IN CDG2G</scope>
</reference>
<reference key="6">
    <citation type="journal article" date="2008" name="Mol. Cell">
        <title>Kinase-selective enrichment enables quantitative phosphoproteomics of the kinome across the cell cycle.</title>
        <authorList>
            <person name="Daub H."/>
            <person name="Olsen J.V."/>
            <person name="Bairlein M."/>
            <person name="Gnad F."/>
            <person name="Oppermann F.S."/>
            <person name="Korner R."/>
            <person name="Greff Z."/>
            <person name="Keri G."/>
            <person name="Stemmann O."/>
            <person name="Mann M."/>
        </authorList>
    </citation>
    <scope>IDENTIFICATION BY MASS SPECTROMETRY [LARGE SCALE ANALYSIS]</scope>
    <source>
        <tissue>Cervix carcinoma</tissue>
    </source>
</reference>
<reference key="7">
    <citation type="journal article" date="2009" name="Anal. Chem.">
        <title>Lys-N and trypsin cover complementary parts of the phosphoproteome in a refined SCX-based approach.</title>
        <authorList>
            <person name="Gauci S."/>
            <person name="Helbig A.O."/>
            <person name="Slijper M."/>
            <person name="Krijgsveld J."/>
            <person name="Heck A.J."/>
            <person name="Mohammed S."/>
        </authorList>
    </citation>
    <scope>ACETYLATION [LARGE SCALE ANALYSIS] AT ALA-2</scope>
    <scope>CLEAVAGE OF INITIATOR METHIONINE [LARGE SCALE ANALYSIS]</scope>
    <scope>IDENTIFICATION BY MASS SPECTROMETRY [LARGE SCALE ANALYSIS]</scope>
</reference>
<reference key="8">
    <citation type="journal article" date="2009" name="Mol. Cell. Proteomics">
        <title>Large-scale proteomics analysis of the human kinome.</title>
        <authorList>
            <person name="Oppermann F.S."/>
            <person name="Gnad F."/>
            <person name="Olsen J.V."/>
            <person name="Hornberger R."/>
            <person name="Greff Z."/>
            <person name="Keri G."/>
            <person name="Mann M."/>
            <person name="Daub H."/>
        </authorList>
    </citation>
    <scope>IDENTIFICATION BY MASS SPECTROMETRY [LARGE SCALE ANALYSIS]</scope>
</reference>
<reference key="9">
    <citation type="journal article" date="2011" name="BMC Syst. Biol.">
        <title>Initial characterization of the human central proteome.</title>
        <authorList>
            <person name="Burkard T.R."/>
            <person name="Planyavsky M."/>
            <person name="Kaupe I."/>
            <person name="Breitwieser F.P."/>
            <person name="Buerckstuemmer T."/>
            <person name="Bennett K.L."/>
            <person name="Superti-Furga G."/>
            <person name="Colinge J."/>
        </authorList>
    </citation>
    <scope>IDENTIFICATION BY MASS SPECTROMETRY [LARGE SCALE ANALYSIS]</scope>
</reference>
<reference key="10">
    <citation type="journal article" date="2012" name="Proc. Natl. Acad. Sci. U.S.A.">
        <title>N-terminal acetylome analyses and functional insights of the N-terminal acetyltransferase NatB.</title>
        <authorList>
            <person name="Van Damme P."/>
            <person name="Lasa M."/>
            <person name="Polevoda B."/>
            <person name="Gazquez C."/>
            <person name="Elosegui-Artola A."/>
            <person name="Kim D.S."/>
            <person name="De Juan-Pardo E."/>
            <person name="Demeyer K."/>
            <person name="Hole K."/>
            <person name="Larrea E."/>
            <person name="Timmerman E."/>
            <person name="Prieto J."/>
            <person name="Arnesen T."/>
            <person name="Sherman F."/>
            <person name="Gevaert K."/>
            <person name="Aldabe R."/>
        </authorList>
    </citation>
    <scope>ACETYLATION [LARGE SCALE ANALYSIS] AT ALA-2</scope>
    <scope>CLEAVAGE OF INITIATOR METHIONINE [LARGE SCALE ANALYSIS]</scope>
    <scope>IDENTIFICATION BY MASS SPECTROMETRY [LARGE SCALE ANALYSIS]</scope>
</reference>
<reference key="11">
    <citation type="journal article" date="2013" name="J. Proteome Res.">
        <title>Toward a comprehensive characterization of a human cancer cell phosphoproteome.</title>
        <authorList>
            <person name="Zhou H."/>
            <person name="Di Palma S."/>
            <person name="Preisinger C."/>
            <person name="Peng M."/>
            <person name="Polat A.N."/>
            <person name="Heck A.J."/>
            <person name="Mohammed S."/>
        </authorList>
    </citation>
    <scope>PHOSPHORYLATION [LARGE SCALE ANALYSIS] AT SER-7</scope>
    <scope>IDENTIFICATION BY MASS SPECTROMETRY [LARGE SCALE ANALYSIS]</scope>
    <source>
        <tissue>Cervix carcinoma</tissue>
    </source>
</reference>
<evidence type="ECO:0000250" key="1"/>
<evidence type="ECO:0000269" key="2">
    <source>
    </source>
</evidence>
<evidence type="ECO:0000269" key="3">
    <source>
    </source>
</evidence>
<evidence type="ECO:0000305" key="4"/>
<evidence type="ECO:0000305" key="5">
    <source>
    </source>
</evidence>
<evidence type="ECO:0007744" key="6">
    <source>
    </source>
</evidence>
<evidence type="ECO:0007744" key="7">
    <source>
    </source>
</evidence>
<evidence type="ECO:0007744" key="8">
    <source>
    </source>
</evidence>
<sequence length="980" mass="108978">MATAATSPALKRLDLRDPAALFETHGAEEIRGLERQVRAEIEHKKEELRQMVGERYRDLIEAADTIGQMRRCAVGLVDAVKATDQYCARLRQAGSAAPRPPRAQQPQQPSQEKFYSMAAQIKLLLEIPEKIWSSMEASQCLHATQLYLLCCHLHSLLQLDSSSSRYSPVLSRFPILIRQVAAASHFRSTILHESKMLLKCQGVSDQAVAEALCSIMLLEESSPRQALTDFLLARKATIQKLLNQPHHGAGIKAQICSLVELLATTLKQAHALFYTLPEGLLPDPALPCGLLFSTLETITGQHPAGKGTGVLQEEMKLCSWFKHLPASIVEFQPTLRTLAHPISQEYLKDTLQKWIHMCNEDIKNGITNLLMYVKSMKGLAGIRDAMWELLTNESTNHSWDVLCRRLLEKPLLFWEDMMQQLFLDRLQTLTKEGFDSISSSSKELLVSALQELESSTSNSPSNKHIHFEYNMSLFLWSESPNDLPSDAAWVSVANRGQFASSGLSMKAQAISPCVQNFCSALDSKLKVKLDDLLAYLPSDDSSLPKDVSPTQAKSSAFDRYADAGTVQEMLRTQSVACIKHIVDCIRAELQSIEEGVQGQQDALNSAKLHSVLFMARLCQSLGELCPHLKQCILGKSESSEKPAREFRALRKQGKVKTQEIIPTQAKWQEVKEVLLQQSVMGYQVWSSAVVKVLIHGFTQSLLLDDAGSVLATATSWDELEIQEEAESGSSVTSKIRLPAQPSWYVQSFLFSLCQEINRVGGHALPKVTLQEMLKSCMVQVVAAYEKLSEEKQIKKEGAFPVTQNRALQLLYDLRYLNIVLTAKGDEVKSGRSKPDSRIEKVTDHLEALIDPFDLDVFTPHLNSNLHRLVQRTSVLFGLVTGTENQLAPRSSTFNSQEPHNILPLASSQIRFGLLPLSMTSTRKAKSTRNIETKAQVVPPARSTAGDPTVPGSLFRQLVSEEDNTSAPSLFKLGWLSSMTK</sequence>
<protein>
    <recommendedName>
        <fullName>Conserved oligomeric Golgi complex subunit 1</fullName>
        <shortName>COG complex subunit 1</shortName>
    </recommendedName>
    <alternativeName>
        <fullName>Component of oligomeric Golgi complex 1</fullName>
    </alternativeName>
</protein>
<proteinExistence type="evidence at protein level"/>
<accession>Q8WTW3</accession>
<accession>Q9NPV9</accession>
<accession>Q9P2G6</accession>
<comment type="function">
    <text evidence="1">Required for normal Golgi function.</text>
</comment>
<comment type="subunit">
    <text evidence="2">Component of the conserved oligomeric Golgi complex which is composed of eight different subunits and is required for normal Golgi morphology and localization.</text>
</comment>
<comment type="interaction">
    <interactant intactId="EBI-368371">
        <id>Q8WTW3</id>
    </interactant>
    <interactant intactId="EBI-368382">
        <id>Q9H9E3</id>
        <label>COG4</label>
    </interactant>
    <organismsDiffer>false</organismsDiffer>
    <experiments>3</experiments>
</comment>
<comment type="subcellular location">
    <subcellularLocation>
        <location evidence="5">Golgi apparatus membrane</location>
        <topology evidence="5">Peripheral membrane protein</topology>
        <orientation evidence="5">Cytoplasmic side</orientation>
    </subcellularLocation>
</comment>
<comment type="disease" evidence="3">
    <disease id="DI-00351">
        <name>Congenital disorder of glycosylation 2G</name>
        <acronym>CDG2G</acronym>
        <description>A multisystem disorder caused by a defect in glycoprotein biosynthesis and characterized by under-glycosylated serum glycoproteins. Congenital disorders of glycosylation result in a wide variety of clinical features, such as defects in the nervous system development, psychomotor retardation, dysmorphic features, hypotonia, coagulation disorders, and immunodeficiency. The broad spectrum of features reflects the critical role of N-glycoproteins during embryonic development, differentiation, and maintenance of cell functions. Clinical features of CDG2G include failure to thrive, generalized hypotonia, growth retardation and mild psychomotor retardation. CDG2G is biochemically characterized by a defect in O-glycosylation as well as N-glycosylation.</description>
        <dbReference type="MIM" id="611209"/>
    </disease>
    <text>The disease is caused by variants affecting the gene represented in this entry.</text>
</comment>
<comment type="similarity">
    <text evidence="4">Belongs to the COG1 family.</text>
</comment>
<comment type="sequence caution" evidence="4">
    <conflict type="frameshift">
        <sequence resource="EMBL-CDS" id="BAA92619"/>
    </conflict>
</comment>
<organism>
    <name type="scientific">Homo sapiens</name>
    <name type="common">Human</name>
    <dbReference type="NCBI Taxonomy" id="9606"/>
    <lineage>
        <taxon>Eukaryota</taxon>
        <taxon>Metazoa</taxon>
        <taxon>Chordata</taxon>
        <taxon>Craniata</taxon>
        <taxon>Vertebrata</taxon>
        <taxon>Euteleostomi</taxon>
        <taxon>Mammalia</taxon>
        <taxon>Eutheria</taxon>
        <taxon>Euarchontoglires</taxon>
        <taxon>Primates</taxon>
        <taxon>Haplorrhini</taxon>
        <taxon>Catarrhini</taxon>
        <taxon>Hominidae</taxon>
        <taxon>Homo</taxon>
    </lineage>
</organism>
<keyword id="KW-0007">Acetylation</keyword>
<keyword id="KW-0900">Congenital disorder of glycosylation</keyword>
<keyword id="KW-0333">Golgi apparatus</keyword>
<keyword id="KW-0472">Membrane</keyword>
<keyword id="KW-0597">Phosphoprotein</keyword>
<keyword id="KW-0653">Protein transport</keyword>
<keyword id="KW-1267">Proteomics identification</keyword>
<keyword id="KW-1185">Reference proteome</keyword>
<keyword id="KW-0813">Transport</keyword>
<feature type="initiator methionine" description="Removed" evidence="6 7">
    <location>
        <position position="1"/>
    </location>
</feature>
<feature type="chain" id="PRO_0000213491" description="Conserved oligomeric Golgi complex subunit 1">
    <location>
        <begin position="2"/>
        <end position="980"/>
    </location>
</feature>
<feature type="modified residue" description="N-acetylalanine" evidence="6 7">
    <location>
        <position position="2"/>
    </location>
</feature>
<feature type="modified residue" description="Phosphoserine" evidence="8">
    <location>
        <position position="7"/>
    </location>
</feature>
<feature type="sequence variant" id="VAR_059231" description="In dbSNP:rs4375725.">
    <original>M</original>
    <variation>L</variation>
    <location>
        <position position="357"/>
    </location>
</feature>
<feature type="sequence variant" id="VAR_020415" description="In dbSNP:rs1026128.">
    <original>N</original>
    <variation>S</variation>
    <location>
        <position position="392"/>
    </location>
</feature>
<feature type="sequence variant" id="VAR_048756" description="In dbSNP:rs7208207.">
    <original>Y</original>
    <variation>C</variation>
    <location>
        <position position="744"/>
    </location>
</feature>
<dbReference type="EMBL" id="BC021985">
    <property type="protein sequence ID" value="AAH21985.1"/>
    <property type="molecule type" value="mRNA"/>
</dbReference>
<dbReference type="EMBL" id="AB037802">
    <property type="protein sequence ID" value="BAA92619.1"/>
    <property type="status" value="ALT_FRAME"/>
    <property type="molecule type" value="mRNA"/>
</dbReference>
<dbReference type="EMBL" id="AL359611">
    <property type="protein sequence ID" value="CAB94881.1"/>
    <property type="molecule type" value="mRNA"/>
</dbReference>
<dbReference type="CCDS" id="CCDS11692.1"/>
<dbReference type="PIR" id="T50629">
    <property type="entry name" value="T50629"/>
</dbReference>
<dbReference type="RefSeq" id="NP_061184.1">
    <property type="nucleotide sequence ID" value="NM_018714.3"/>
</dbReference>
<dbReference type="SMR" id="Q8WTW3"/>
<dbReference type="BioGRID" id="114783">
    <property type="interactions" value="107"/>
</dbReference>
<dbReference type="ComplexPortal" id="CPX-6199">
    <property type="entry name" value="COG tethering complex"/>
</dbReference>
<dbReference type="CORUM" id="Q8WTW3"/>
<dbReference type="FunCoup" id="Q8WTW3">
    <property type="interactions" value="2961"/>
</dbReference>
<dbReference type="IntAct" id="Q8WTW3">
    <property type="interactions" value="55"/>
</dbReference>
<dbReference type="MINT" id="Q8WTW3"/>
<dbReference type="STRING" id="9606.ENSP00000299886"/>
<dbReference type="ChEMBL" id="CHEMBL4105805"/>
<dbReference type="GlyGen" id="Q8WTW3">
    <property type="glycosylation" value="2 sites, 1 O-linked glycan (1 site)"/>
</dbReference>
<dbReference type="iPTMnet" id="Q8WTW3"/>
<dbReference type="PhosphoSitePlus" id="Q8WTW3"/>
<dbReference type="SwissPalm" id="Q8WTW3"/>
<dbReference type="BioMuta" id="COG1"/>
<dbReference type="DMDM" id="22653695"/>
<dbReference type="jPOST" id="Q8WTW3"/>
<dbReference type="MassIVE" id="Q8WTW3"/>
<dbReference type="PaxDb" id="9606-ENSP00000299886"/>
<dbReference type="PeptideAtlas" id="Q8WTW3"/>
<dbReference type="ProteomicsDB" id="74609"/>
<dbReference type="Pumba" id="Q8WTW3"/>
<dbReference type="Antibodypedia" id="31901">
    <property type="antibodies" value="124 antibodies from 27 providers"/>
</dbReference>
<dbReference type="DNASU" id="9382"/>
<dbReference type="Ensembl" id="ENST00000299886.9">
    <property type="protein sequence ID" value="ENSP00000299886.4"/>
    <property type="gene ID" value="ENSG00000166685.13"/>
</dbReference>
<dbReference type="GeneID" id="9382"/>
<dbReference type="KEGG" id="hsa:9382"/>
<dbReference type="MANE-Select" id="ENST00000299886.9">
    <property type="protein sequence ID" value="ENSP00000299886.4"/>
    <property type="RefSeq nucleotide sequence ID" value="NM_018714.3"/>
    <property type="RefSeq protein sequence ID" value="NP_061184.1"/>
</dbReference>
<dbReference type="UCSC" id="uc002jjg.4">
    <property type="organism name" value="human"/>
</dbReference>
<dbReference type="AGR" id="HGNC:6545"/>
<dbReference type="CTD" id="9382"/>
<dbReference type="DisGeNET" id="9382"/>
<dbReference type="GeneCards" id="COG1"/>
<dbReference type="GeneReviews" id="COG1"/>
<dbReference type="HGNC" id="HGNC:6545">
    <property type="gene designation" value="COG1"/>
</dbReference>
<dbReference type="HPA" id="ENSG00000166685">
    <property type="expression patterns" value="Low tissue specificity"/>
</dbReference>
<dbReference type="MalaCards" id="COG1"/>
<dbReference type="MIM" id="606973">
    <property type="type" value="gene"/>
</dbReference>
<dbReference type="MIM" id="611209">
    <property type="type" value="phenotype"/>
</dbReference>
<dbReference type="neXtProt" id="NX_Q8WTW3"/>
<dbReference type="OpenTargets" id="ENSG00000166685"/>
<dbReference type="Orphanet" id="263508">
    <property type="disease" value="COG1-CDG"/>
</dbReference>
<dbReference type="PharmGKB" id="PA26696"/>
<dbReference type="VEuPathDB" id="HostDB:ENSG00000166685"/>
<dbReference type="eggNOG" id="KOG2033">
    <property type="taxonomic scope" value="Eukaryota"/>
</dbReference>
<dbReference type="GeneTree" id="ENSGT00390000017136"/>
<dbReference type="InParanoid" id="Q8WTW3"/>
<dbReference type="OMA" id="DNPRRQT"/>
<dbReference type="OrthoDB" id="46189at2759"/>
<dbReference type="PAN-GO" id="Q8WTW3">
    <property type="GO annotations" value="1 GO annotation based on evolutionary models"/>
</dbReference>
<dbReference type="PhylomeDB" id="Q8WTW3"/>
<dbReference type="TreeFam" id="TF314678"/>
<dbReference type="PathwayCommons" id="Q8WTW3"/>
<dbReference type="Reactome" id="R-HSA-6807878">
    <property type="pathway name" value="COPI-mediated anterograde transport"/>
</dbReference>
<dbReference type="Reactome" id="R-HSA-6811438">
    <property type="pathway name" value="Intra-Golgi traffic"/>
</dbReference>
<dbReference type="Reactome" id="R-HSA-6811440">
    <property type="pathway name" value="Retrograde transport at the Trans-Golgi-Network"/>
</dbReference>
<dbReference type="SignaLink" id="Q8WTW3"/>
<dbReference type="BioGRID-ORCS" id="9382">
    <property type="hits" value="396 hits in 1167 CRISPR screens"/>
</dbReference>
<dbReference type="ChiTaRS" id="COG1">
    <property type="organism name" value="human"/>
</dbReference>
<dbReference type="GeneWiki" id="COG1"/>
<dbReference type="GenomeRNAi" id="9382"/>
<dbReference type="Pharos" id="Q8WTW3">
    <property type="development level" value="Tbio"/>
</dbReference>
<dbReference type="PRO" id="PR:Q8WTW3"/>
<dbReference type="Proteomes" id="UP000005640">
    <property type="component" value="Chromosome 17"/>
</dbReference>
<dbReference type="RNAct" id="Q8WTW3">
    <property type="molecule type" value="protein"/>
</dbReference>
<dbReference type="Bgee" id="ENSG00000166685">
    <property type="expression patterns" value="Expressed in right hemisphere of cerebellum and 173 other cell types or tissues"/>
</dbReference>
<dbReference type="ExpressionAtlas" id="Q8WTW3">
    <property type="expression patterns" value="baseline and differential"/>
</dbReference>
<dbReference type="GO" id="GO:0005794">
    <property type="term" value="C:Golgi apparatus"/>
    <property type="evidence" value="ECO:0000314"/>
    <property type="project" value="UniProtKB"/>
</dbReference>
<dbReference type="GO" id="GO:0000139">
    <property type="term" value="C:Golgi membrane"/>
    <property type="evidence" value="ECO:0000304"/>
    <property type="project" value="Reactome"/>
</dbReference>
<dbReference type="GO" id="GO:0017119">
    <property type="term" value="C:Golgi transport complex"/>
    <property type="evidence" value="ECO:0000314"/>
    <property type="project" value="UniProtKB"/>
</dbReference>
<dbReference type="GO" id="GO:0032588">
    <property type="term" value="C:trans-Golgi network membrane"/>
    <property type="evidence" value="ECO:0000304"/>
    <property type="project" value="Reactome"/>
</dbReference>
<dbReference type="GO" id="GO:0070085">
    <property type="term" value="P:glycosylation"/>
    <property type="evidence" value="ECO:0000315"/>
    <property type="project" value="ComplexPortal"/>
</dbReference>
<dbReference type="GO" id="GO:0007030">
    <property type="term" value="P:Golgi organization"/>
    <property type="evidence" value="ECO:0000315"/>
    <property type="project" value="ComplexPortal"/>
</dbReference>
<dbReference type="GO" id="GO:0006891">
    <property type="term" value="P:intra-Golgi vesicle-mediated transport"/>
    <property type="evidence" value="ECO:0000303"/>
    <property type="project" value="UniProtKB"/>
</dbReference>
<dbReference type="GO" id="GO:0015031">
    <property type="term" value="P:protein transport"/>
    <property type="evidence" value="ECO:0007669"/>
    <property type="project" value="UniProtKB-KW"/>
</dbReference>
<dbReference type="GO" id="GO:0000301">
    <property type="term" value="P:retrograde transport, vesicle recycling within Golgi"/>
    <property type="evidence" value="ECO:0000315"/>
    <property type="project" value="ComplexPortal"/>
</dbReference>
<dbReference type="InterPro" id="IPR033370">
    <property type="entry name" value="COG1"/>
</dbReference>
<dbReference type="PANTHER" id="PTHR31658">
    <property type="entry name" value="CONSERVED OLIGOMERIC GOLGI COMPLEX SUBUNIT 1"/>
    <property type="match status" value="1"/>
</dbReference>
<dbReference type="PANTHER" id="PTHR31658:SF0">
    <property type="entry name" value="CONSERVED OLIGOMERIC GOLGI COMPLEX SUBUNIT 1"/>
    <property type="match status" value="1"/>
</dbReference>
<dbReference type="Pfam" id="PF08700">
    <property type="entry name" value="VPS51_Exo84_N"/>
    <property type="match status" value="1"/>
</dbReference>
<gene>
    <name type="primary">COG1</name>
    <name type="synonym">KIAA1381</name>
    <name type="synonym">LDLB</name>
</gene>